<sequence length="584" mass="64318">MIFAGKAPSNTSTLMKFYSLLLYSLLFSFPFLCHPLPLPSYLHHTINLTHSLLAASNPSLVNNCWLCISLSSSAYTAVPAVQTDWATSPISLHLRTSFNSPHLYPPEELIYFLDRSSKTSPDISHQQAAALLRTYLKNLSPYINSTPPIFGPLTTQTTIPVAAPLCISWQRPTGIPLGNLSPSRCSFTLHLRSPTTNINETIGAFQLHITDKPSINTDKLKNISSNYCLGRHLPCISLHPWLSSPCSSDSPPRPSSCLLIPSPENNSERLLVDTRRFLIHHENRTFPSTQLPHQSPLQPLTAAALAGSLGVWVQDTPFSTPSHLFTLHLQFCLAQGLFFLCGSSTYMCLPANWTGTCTLVFLTPKIQFANGTEELPVPLMTPTQQKRVIPLIPLMVGLGLSASTVALGTGIAGISTSVMTFRSLSNDFSASITDISQTLSVLQAQVDSLAAVVLQNRRGLDLLTAEKGGLCIFLNEECCFYLNQSGLVYDNIKKLKDRAQKLANQASNYAEPPWALSNWMSWVLPIVSPLIPIFLLLLFGPCIFRLVSQFIQNRIQAITNHSIRQMFLLTSPQYHPLPQDLPSA</sequence>
<accession>Q9N2K0</accession>
<accession>O00354</accession>
<accession>Q96L63</accession>
<accession>Q9UNM3</accession>
<evidence type="ECO:0000250" key="1"/>
<evidence type="ECO:0000255" key="2"/>
<evidence type="ECO:0000269" key="3">
    <source>
    </source>
</evidence>
<evidence type="ECO:0000269" key="4">
    <source>
    </source>
</evidence>
<evidence type="ECO:0000269" key="5">
    <source>
    </source>
</evidence>
<evidence type="ECO:0000269" key="6">
    <source>
    </source>
</evidence>
<evidence type="ECO:0000269" key="7">
    <source>
    </source>
</evidence>
<evidence type="ECO:0000269" key="8">
    <source>
    </source>
</evidence>
<evidence type="ECO:0000305" key="9"/>
<reference key="1">
    <citation type="journal article" date="1999" name="Virology">
        <title>Isolation of a human endogenous retroviral HERV-H element with an open env reading frame.</title>
        <authorList>
            <person name="Lindeskog M."/>
            <person name="Mager D.L."/>
            <person name="Blomberg J."/>
        </authorList>
    </citation>
    <scope>NUCLEOTIDE SEQUENCE [GENOMIC DNA]</scope>
    <scope>VARIANTS LEU-81 AND LEU-150</scope>
</reference>
<reference key="2">
    <citation type="journal article" date="2001" name="Virology">
        <title>Characterization of the three HERV-H proviruses with an open envelope reading frame encompassing the immunosuppressive domain and evolutionary history in primates.</title>
        <authorList>
            <person name="de Parseval N."/>
            <person name="Casella J.-F."/>
            <person name="Gressin L."/>
            <person name="Heidmann T."/>
        </authorList>
    </citation>
    <scope>NUCLEOTIDE SEQUENCE [GENOMIC DNA]</scope>
    <scope>VARIANTS LEU-81 AND LEU-150</scope>
</reference>
<reference key="3">
    <citation type="journal article" date="2002" name="AIDS Res. Hum. Retroviruses">
        <title>Full-length HERV-H elements with env SU open reading frames in the human genome.</title>
        <authorList>
            <person name="Jern P."/>
            <person name="Lindeskog M."/>
            <person name="Karlsson D."/>
            <person name="Blomberg J."/>
        </authorList>
    </citation>
    <scope>NUCLEOTIDE SEQUENCE [GENOMIC DNA] OF 1-402</scope>
    <scope>VARIANT LEU-81</scope>
</reference>
<reference key="4">
    <citation type="journal article" date="2001" name="J. Gen. Virol.">
        <title>The full-length envelope of an HERV-H human endogenous retrovirus has immunosuppressive properties.</title>
        <authorList>
            <person name="Mangeney M."/>
            <person name="de Parseval N."/>
            <person name="Thomas G."/>
            <person name="Heidmann T."/>
        </authorList>
    </citation>
    <scope>FUNCTION</scope>
</reference>
<reference key="5">
    <citation type="journal article" date="2003" name="Proc. Natl. Acad. Sci. U.S.A.">
        <title>Genomewide screening for fusogenic human endogenous retrovirus envelopes identifies syncytin 2, a gene conserved on primate evolution.</title>
        <authorList>
            <person name="Blaise S."/>
            <person name="de Parseval N."/>
            <person name="Benit L."/>
            <person name="Heidmann T."/>
        </authorList>
    </citation>
    <scope>FUNCTION</scope>
</reference>
<reference key="6">
    <citation type="journal article" date="2003" name="J. Virol.">
        <title>Survey of human genes of retroviral origin: identification and transcriptome of the genes with coding capacity for complete envelope proteins.</title>
        <authorList>
            <person name="de Parseval N."/>
            <person name="Lazar V."/>
            <person name="Casella J.-F."/>
            <person name="Benit L."/>
            <person name="Heidmann T."/>
        </authorList>
    </citation>
    <scope>TISSUE SPECIFICITY</scope>
</reference>
<organism>
    <name type="scientific">Homo sapiens</name>
    <name type="common">Human</name>
    <dbReference type="NCBI Taxonomy" id="9606"/>
    <lineage>
        <taxon>Eukaryota</taxon>
        <taxon>Metazoa</taxon>
        <taxon>Chordata</taxon>
        <taxon>Craniata</taxon>
        <taxon>Vertebrata</taxon>
        <taxon>Euteleostomi</taxon>
        <taxon>Mammalia</taxon>
        <taxon>Eutheria</taxon>
        <taxon>Euarchontoglires</taxon>
        <taxon>Primates</taxon>
        <taxon>Haplorrhini</taxon>
        <taxon>Catarrhini</taxon>
        <taxon>Hominidae</taxon>
        <taxon>Homo</taxon>
    </lineage>
</organism>
<dbReference type="EMBL" id="AF108843">
    <property type="protein sequence ID" value="AAD34324.1"/>
    <property type="molecule type" value="Genomic_DNA"/>
</dbReference>
<dbReference type="EMBL" id="U88902">
    <property type="protein sequence ID" value="AAC79121.1"/>
    <property type="molecule type" value="Genomic_DNA"/>
</dbReference>
<dbReference type="EMBL" id="AJ289709">
    <property type="protein sequence ID" value="CAB94192.1"/>
    <property type="molecule type" value="Genomic_DNA"/>
</dbReference>
<dbReference type="EMBL" id="AY050297">
    <property type="protein sequence ID" value="AAL11491.1"/>
    <property type="molecule type" value="Genomic_DNA"/>
</dbReference>
<dbReference type="PIR" id="B44282">
    <property type="entry name" value="B44282"/>
</dbReference>
<dbReference type="SMR" id="Q9N2K0"/>
<dbReference type="GlyGen" id="Q9N2K0">
    <property type="glycosylation" value="9 sites"/>
</dbReference>
<dbReference type="BioMuta" id="-"/>
<dbReference type="MassIVE" id="Q9N2K0"/>
<dbReference type="neXtProt" id="NX_Q9N2K0"/>
<dbReference type="InParanoid" id="Q9N2K0"/>
<dbReference type="PAN-GO" id="Q9N2K0">
    <property type="GO annotations" value="0 GO annotations based on evolutionary models"/>
</dbReference>
<dbReference type="PhylomeDB" id="Q9N2K0"/>
<dbReference type="Pharos" id="Q9N2K0">
    <property type="development level" value="Tdark"/>
</dbReference>
<dbReference type="Proteomes" id="UP000005640">
    <property type="component" value="Unplaced"/>
</dbReference>
<dbReference type="RNAct" id="Q9N2K0">
    <property type="molecule type" value="protein"/>
</dbReference>
<dbReference type="GO" id="GO:0005886">
    <property type="term" value="C:plasma membrane"/>
    <property type="evidence" value="ECO:0007669"/>
    <property type="project" value="UniProtKB-SubCell"/>
</dbReference>
<dbReference type="CDD" id="cd09851">
    <property type="entry name" value="HTLV-1-like_HR1-HR2"/>
    <property type="match status" value="1"/>
</dbReference>
<dbReference type="Gene3D" id="1.10.287.210">
    <property type="match status" value="1"/>
</dbReference>
<dbReference type="InterPro" id="IPR018154">
    <property type="entry name" value="TLV/ENV_coat_polyprotein"/>
</dbReference>
<dbReference type="PANTHER" id="PTHR10424:SF60">
    <property type="entry name" value="HERV-H_2Q24.1 PROVIRUS ANCESTRAL ENV POLYPROTEIN-RELATED"/>
    <property type="match status" value="1"/>
</dbReference>
<dbReference type="PANTHER" id="PTHR10424">
    <property type="entry name" value="VIRAL ENVELOPE PROTEIN"/>
    <property type="match status" value="1"/>
</dbReference>
<dbReference type="Pfam" id="PF00429">
    <property type="entry name" value="TLV_coat"/>
    <property type="match status" value="2"/>
</dbReference>
<dbReference type="SUPFAM" id="SSF58069">
    <property type="entry name" value="Virus ectodomain"/>
    <property type="match status" value="1"/>
</dbReference>
<feature type="signal peptide" evidence="2">
    <location>
        <begin position="1"/>
        <end position="35"/>
    </location>
</feature>
<feature type="chain" id="PRO_0000008460" description="HERV-H_2q24.3 provirus ancestral Env polyprotein">
    <location>
        <begin position="36"/>
        <end position="584"/>
    </location>
</feature>
<feature type="chain" id="PRO_0000008461" description="Surface protein" evidence="1">
    <location>
        <begin position="36"/>
        <end position="387"/>
    </location>
</feature>
<feature type="chain" id="PRO_0000008462" description="Transmembrane protein" evidence="1">
    <location>
        <begin position="388"/>
        <end position="584"/>
    </location>
</feature>
<feature type="topological domain" description="Extracellular" evidence="2">
    <location>
        <begin position="36"/>
        <end position="523"/>
    </location>
</feature>
<feature type="transmembrane region" description="Helical" evidence="2">
    <location>
        <begin position="524"/>
        <end position="544"/>
    </location>
</feature>
<feature type="topological domain" description="Cytoplasmic" evidence="2">
    <location>
        <begin position="545"/>
        <end position="584"/>
    </location>
</feature>
<feature type="region of interest" description="Fusion peptide" evidence="1">
    <location>
        <begin position="388"/>
        <end position="408"/>
    </location>
</feature>
<feature type="short sequence motif" description="CXXC" evidence="1">
    <location>
        <begin position="64"/>
        <end position="67"/>
    </location>
</feature>
<feature type="short sequence motif" description="CKS-17" evidence="1">
    <location>
        <begin position="454"/>
        <end position="470"/>
    </location>
</feature>
<feature type="short sequence motif" description="CX6CC" evidence="1">
    <location>
        <begin position="471"/>
        <end position="479"/>
    </location>
</feature>
<feature type="site" description="Cleavage" evidence="1">
    <location>
        <begin position="387"/>
        <end position="388"/>
    </location>
</feature>
<feature type="glycosylation site" description="N-linked (GlcNAc...) asparagine" evidence="2">
    <location>
        <position position="47"/>
    </location>
</feature>
<feature type="glycosylation site" description="N-linked (GlcNAc...) asparagine" evidence="2">
    <location>
        <position position="199"/>
    </location>
</feature>
<feature type="glycosylation site" description="N-linked (GlcNAc...) asparagine" evidence="2">
    <location>
        <position position="222"/>
    </location>
</feature>
<feature type="glycosylation site" description="N-linked (GlcNAc...) asparagine" evidence="2">
    <location>
        <position position="265"/>
    </location>
</feature>
<feature type="glycosylation site" description="N-linked (GlcNAc...) asparagine" evidence="2">
    <location>
        <position position="283"/>
    </location>
</feature>
<feature type="glycosylation site" description="N-linked (GlcNAc...) asparagine" evidence="2">
    <location>
        <position position="352"/>
    </location>
</feature>
<feature type="glycosylation site" description="N-linked (GlcNAc...) asparagine" evidence="2">
    <location>
        <position position="370"/>
    </location>
</feature>
<feature type="glycosylation site" description="N-linked (GlcNAc...) asparagine" evidence="2">
    <location>
        <position position="483"/>
    </location>
</feature>
<feature type="disulfide bond" evidence="1">
    <location>
        <begin position="471"/>
        <end position="478"/>
    </location>
</feature>
<feature type="sequence variant" id="VAR_017799" description="In allele HERV-H19." evidence="3 4 6">
    <original>V</original>
    <variation>L</variation>
    <location>
        <position position="81"/>
    </location>
</feature>
<feature type="sequence variant" id="VAR_017800" description="In allele HERV-H19." evidence="3 4">
    <original>F</original>
    <variation>L</variation>
    <location>
        <position position="150"/>
    </location>
</feature>
<feature type="sequence conflict" description="In Ref. 3; AAL11491." evidence="9" ref="3">
    <original>A</original>
    <variation>T</variation>
    <location>
        <position position="80"/>
    </location>
</feature>
<feature type="sequence conflict" description="In Ref. 3; AAL11491." evidence="9" ref="3">
    <original>F</original>
    <variation>C</variation>
    <location>
        <position position="98"/>
    </location>
</feature>
<feature type="sequence conflict" description="In Ref. 3; AAL11491." evidence="9" ref="3">
    <original>T</original>
    <variation>A</variation>
    <location>
        <position position="316"/>
    </location>
</feature>
<feature type="sequence conflict" description="In Ref. 1; AAC79121." evidence="9" ref="1">
    <original>S</original>
    <variation>G</variation>
    <location>
        <position position="319"/>
    </location>
</feature>
<protein>
    <recommendedName>
        <fullName>HERV-H_2q24.3 provirus ancestral Env polyprotein</fullName>
    </recommendedName>
    <alternativeName>
        <fullName>Env protein HERV-H/p62</fullName>
    </alternativeName>
    <alternativeName>
        <fullName>Env protein HERV-H19</fullName>
    </alternativeName>
    <alternativeName>
        <fullName>Env protein HERV-Hcl.3</fullName>
    </alternativeName>
    <alternativeName>
        <fullName>Envelope polyprotein</fullName>
    </alternativeName>
    <alternativeName>
        <fullName>HERV-H/env62</fullName>
    </alternativeName>
    <component>
        <recommendedName>
            <fullName>Surface protein</fullName>
            <shortName>SU</shortName>
        </recommendedName>
    </component>
    <component>
        <recommendedName>
            <fullName>Transmembrane protein</fullName>
            <shortName>TM</shortName>
        </recommendedName>
    </component>
</protein>
<name>ENH1_HUMAN</name>
<proteinExistence type="evidence at transcript level"/>
<comment type="function">
    <text evidence="5 8">Retroviral envelope proteins mediate receptor recognition and membrane fusion during early infection. Endogenous envelope proteins may have kept, lost or modified their original function during evolution. This endogenous envelope protein has lost its original fusogenic properties but has immunosuppressive properties in vivo.</text>
</comment>
<comment type="function">
    <text evidence="1">SU mediates receptor recognition.</text>
</comment>
<comment type="function">
    <text evidence="1">TM anchors the envelope heterodimer to the viral membrane through one transmembrane domain. The other hydrophobic domain, called fusion peptide, mediates fusion of the viral membrane with the target cell membrane (By similarity).</text>
</comment>
<comment type="subunit">
    <text evidence="1">The surface (SU) and transmembrane (TM) proteins form a heterodimer. SU and TM are attached by noncovalent interactions or by a labile interchain disulfide bond (By similarity).</text>
</comment>
<comment type="subcellular location">
    <subcellularLocation>
        <location>Virion</location>
    </subcellularLocation>
</comment>
<comment type="subcellular location">
    <molecule>Transmembrane protein</molecule>
    <subcellularLocation>
        <location evidence="9">Cell membrane</location>
        <topology evidence="9">Single-pass membrane protein</topology>
    </subcellularLocation>
</comment>
<comment type="tissue specificity">
    <text evidence="7">Low expression in skin and testis. No expression in several cell lines.</text>
</comment>
<comment type="domain">
    <text evidence="1">Contains the CKS-17 immunosuppressive domain present in many retroviral envelope proteins. As a synthetic peptide, it inhibits immune function in vitro and in vivo (By similarity).</text>
</comment>
<comment type="PTM">
    <text evidence="1">Specific enzymatic cleavages in vivo yield the mature SU and TM proteins.</text>
</comment>
<comment type="PTM">
    <text evidence="1">The CXXC motif is highly conserved across a broad range of retroviral envelope proteins. It is thought to participate in the formation of a labile disulfide bond possibly with the CX6CC motif present in the transmembrane protein. Isomerization of the intersubunit disulfide bond to an SU intrachain disulfide bond is thought to occur upon receptor recognition in order to allow membrane fusion (By similarity).</text>
</comment>
<comment type="polymorphism">
    <text>Envelope protein HERV-H19 and HERV-H/p62 are allelic variants of the same provirus.</text>
</comment>
<comment type="miscellaneous">
    <text>Ortholog in Pan troglodytes.</text>
</comment>
<comment type="miscellaneous">
    <text>HERV-H family subgenomic RNAs have been observed.</text>
</comment>
<comment type="miscellaneous">
    <text>This provirus is intergenic, the closest flanking genes being TAIP2 and GALNT3.</text>
</comment>
<comment type="similarity">
    <text evidence="9">Belongs to the gamma type-C retroviral envelope protein family. HERV class-I H env subfamily.</text>
</comment>
<keyword id="KW-1003">Cell membrane</keyword>
<keyword id="KW-0165">Cleavage on pair of basic residues</keyword>
<keyword id="KW-1015">Disulfide bond</keyword>
<keyword id="KW-0895">ERV</keyword>
<keyword id="KW-0325">Glycoprotein</keyword>
<keyword id="KW-0472">Membrane</keyword>
<keyword id="KW-1185">Reference proteome</keyword>
<keyword id="KW-0732">Signal</keyword>
<keyword id="KW-0812">Transmembrane</keyword>
<keyword id="KW-1133">Transmembrane helix</keyword>
<keyword id="KW-0814">Transposable element</keyword>
<keyword id="KW-0261">Viral envelope protein</keyword>
<keyword id="KW-0946">Virion</keyword>